<sequence length="109" mass="12778">METTKPSFQDVLEFVRLFRRKNKLQREIQDVEKKIRDNQKRVLLLDNLSDYIKPGMSVEAIQGIIASMKGDYEDRVDDYIIKNAELSKERRDISKKLKAMGEMKNGEAK</sequence>
<protein>
    <recommendedName>
        <fullName evidence="1">Pole-localizer protein TmaR</fullName>
    </recommendedName>
</protein>
<reference key="1">
    <citation type="journal article" date="2002" name="Nucleic Acids Res.">
        <title>Genome sequence of Shigella flexneri 2a: insights into pathogenicity through comparison with genomes of Escherichia coli K12 and O157.</title>
        <authorList>
            <person name="Jin Q."/>
            <person name="Yuan Z."/>
            <person name="Xu J."/>
            <person name="Wang Y."/>
            <person name="Shen Y."/>
            <person name="Lu W."/>
            <person name="Wang J."/>
            <person name="Liu H."/>
            <person name="Yang J."/>
            <person name="Yang F."/>
            <person name="Zhang X."/>
            <person name="Zhang J."/>
            <person name="Yang G."/>
            <person name="Wu H."/>
            <person name="Qu D."/>
            <person name="Dong J."/>
            <person name="Sun L."/>
            <person name="Xue Y."/>
            <person name="Zhao A."/>
            <person name="Gao Y."/>
            <person name="Zhu J."/>
            <person name="Kan B."/>
            <person name="Ding K."/>
            <person name="Chen S."/>
            <person name="Cheng H."/>
            <person name="Yao Z."/>
            <person name="He B."/>
            <person name="Chen R."/>
            <person name="Ma D."/>
            <person name="Qiang B."/>
            <person name="Wen Y."/>
            <person name="Hou Y."/>
            <person name="Yu J."/>
        </authorList>
    </citation>
    <scope>NUCLEOTIDE SEQUENCE [LARGE SCALE GENOMIC DNA]</scope>
    <source>
        <strain>301 / Serotype 2a</strain>
    </source>
</reference>
<reference key="2">
    <citation type="journal article" date="2003" name="Infect. Immun.">
        <title>Complete genome sequence and comparative genomics of Shigella flexneri serotype 2a strain 2457T.</title>
        <authorList>
            <person name="Wei J."/>
            <person name="Goldberg M.B."/>
            <person name="Burland V."/>
            <person name="Venkatesan M.M."/>
            <person name="Deng W."/>
            <person name="Fournier G."/>
            <person name="Mayhew G.F."/>
            <person name="Plunkett G. III"/>
            <person name="Rose D.J."/>
            <person name="Darling A."/>
            <person name="Mau B."/>
            <person name="Perna N.T."/>
            <person name="Payne S.M."/>
            <person name="Runyen-Janecky L.J."/>
            <person name="Zhou S."/>
            <person name="Schwartz D.C."/>
            <person name="Blattner F.R."/>
        </authorList>
    </citation>
    <scope>NUCLEOTIDE SEQUENCE [LARGE SCALE GENOMIC DNA]</scope>
    <source>
        <strain>ATCC 700930 / 2457T / Serotype 2a</strain>
    </source>
</reference>
<comment type="function">
    <text evidence="1">Pole-localizer protein involved in the regulation of several cellular processes.</text>
</comment>
<comment type="subcellular location">
    <subcellularLocation>
        <location evidence="1">Cytoplasm</location>
    </subcellularLocation>
    <text evidence="1">Forms clusters that localize mainly near one pole of the cell.</text>
</comment>
<comment type="similarity">
    <text evidence="1">Belongs to the pole-localizer TmaR family.</text>
</comment>
<comment type="sequence caution" evidence="2">
    <conflict type="erroneous initiation">
        <sequence resource="EMBL-CDS" id="AAN43608"/>
    </conflict>
</comment>
<comment type="sequence caution" evidence="2">
    <conflict type="erroneous initiation">
        <sequence resource="EMBL-CDS" id="AAP17429"/>
    </conflict>
</comment>
<organism>
    <name type="scientific">Shigella flexneri</name>
    <dbReference type="NCBI Taxonomy" id="623"/>
    <lineage>
        <taxon>Bacteria</taxon>
        <taxon>Pseudomonadati</taxon>
        <taxon>Pseudomonadota</taxon>
        <taxon>Gammaproteobacteria</taxon>
        <taxon>Enterobacterales</taxon>
        <taxon>Enterobacteriaceae</taxon>
        <taxon>Shigella</taxon>
    </lineage>
</organism>
<name>TMAR_SHIFL</name>
<proteinExistence type="inferred from homology"/>
<keyword id="KW-0175">Coiled coil</keyword>
<keyword id="KW-0963">Cytoplasm</keyword>
<keyword id="KW-1185">Reference proteome</keyword>
<feature type="chain" id="PRO_0000072769" description="Pole-localizer protein TmaR">
    <location>
        <begin position="1"/>
        <end position="109"/>
    </location>
</feature>
<feature type="coiled-coil region" evidence="1">
    <location>
        <begin position="14"/>
        <end position="41"/>
    </location>
</feature>
<gene>
    <name evidence="1" type="primary">tmaR</name>
    <name type="synonym">yeeX</name>
    <name type="ordered locus">SF2067</name>
    <name type="ordered locus">S2177</name>
</gene>
<evidence type="ECO:0000255" key="1">
    <source>
        <dbReference type="HAMAP-Rule" id="MF_00683"/>
    </source>
</evidence>
<evidence type="ECO:0000305" key="2"/>
<accession>P0A8M9</accession>
<accession>O07992</accession>
<accession>O07995</accession>
<accession>P76367</accession>
<accession>Q8X8U3</accession>
<dbReference type="EMBL" id="AE005674">
    <property type="protein sequence ID" value="AAN43608.1"/>
    <property type="status" value="ALT_INIT"/>
    <property type="molecule type" value="Genomic_DNA"/>
</dbReference>
<dbReference type="EMBL" id="AE014073">
    <property type="protein sequence ID" value="AAP17429.1"/>
    <property type="status" value="ALT_INIT"/>
    <property type="molecule type" value="Genomic_DNA"/>
</dbReference>
<dbReference type="RefSeq" id="NP_707901.1">
    <property type="nucleotide sequence ID" value="NC_004337.2"/>
</dbReference>
<dbReference type="RefSeq" id="WP_000450409.1">
    <property type="nucleotide sequence ID" value="NZ_WPGU01000336.1"/>
</dbReference>
<dbReference type="SMR" id="P0A8M9"/>
<dbReference type="STRING" id="198214.SF2067"/>
<dbReference type="PaxDb" id="198214-SF2067"/>
<dbReference type="GeneID" id="1025281"/>
<dbReference type="KEGG" id="sfl:SF2067"/>
<dbReference type="KEGG" id="sfx:S2177"/>
<dbReference type="PATRIC" id="fig|198214.7.peg.2475"/>
<dbReference type="HOGENOM" id="CLU_153146_0_0_6"/>
<dbReference type="Proteomes" id="UP000001006">
    <property type="component" value="Chromosome"/>
</dbReference>
<dbReference type="Proteomes" id="UP000002673">
    <property type="component" value="Chromosome"/>
</dbReference>
<dbReference type="GO" id="GO:0005829">
    <property type="term" value="C:cytosol"/>
    <property type="evidence" value="ECO:0007669"/>
    <property type="project" value="TreeGrafter"/>
</dbReference>
<dbReference type="HAMAP" id="MF_00683">
    <property type="entry name" value="Pole_loc_TmaR"/>
    <property type="match status" value="1"/>
</dbReference>
<dbReference type="InterPro" id="IPR007458">
    <property type="entry name" value="DUF496"/>
</dbReference>
<dbReference type="InterPro" id="IPR053375">
    <property type="entry name" value="UPF0265"/>
</dbReference>
<dbReference type="NCBIfam" id="NF003844">
    <property type="entry name" value="PRK05423.1"/>
    <property type="match status" value="1"/>
</dbReference>
<dbReference type="NCBIfam" id="NF040881">
    <property type="entry name" value="PTS_reg_TmaR"/>
    <property type="match status" value="1"/>
</dbReference>
<dbReference type="PANTHER" id="PTHR39591">
    <property type="entry name" value="UPF0265 PROTEIN YEEX"/>
    <property type="match status" value="1"/>
</dbReference>
<dbReference type="PANTHER" id="PTHR39591:SF1">
    <property type="entry name" value="UPF0265 PROTEIN YEEX"/>
    <property type="match status" value="1"/>
</dbReference>
<dbReference type="Pfam" id="PF04363">
    <property type="entry name" value="DUF496"/>
    <property type="match status" value="1"/>
</dbReference>
<dbReference type="PIRSF" id="PIRSF028773">
    <property type="entry name" value="UCP028773"/>
    <property type="match status" value="1"/>
</dbReference>